<protein>
    <recommendedName>
        <fullName evidence="10">F-box protein dre-1</fullName>
    </recommendedName>
    <alternativeName>
        <fullName evidence="12">Daf-12 redundant function protein</fullName>
    </alternativeName>
</protein>
<name>DRE1_CAEEL</name>
<evidence type="ECO:0000255" key="1"/>
<evidence type="ECO:0000255" key="2">
    <source>
        <dbReference type="PROSITE-ProRule" id="PRU00080"/>
    </source>
</evidence>
<evidence type="ECO:0000255" key="3">
    <source>
        <dbReference type="PROSITE-ProRule" id="PRU00508"/>
    </source>
</evidence>
<evidence type="ECO:0000256" key="4">
    <source>
        <dbReference type="SAM" id="MobiDB-lite"/>
    </source>
</evidence>
<evidence type="ECO:0000269" key="5">
    <source>
    </source>
</evidence>
<evidence type="ECO:0000269" key="6">
    <source>
    </source>
</evidence>
<evidence type="ECO:0000269" key="7">
    <source>
    </source>
</evidence>
<evidence type="ECO:0000269" key="8">
    <source>
    </source>
</evidence>
<evidence type="ECO:0000269" key="9">
    <source>
    </source>
</evidence>
<evidence type="ECO:0000305" key="10"/>
<evidence type="ECO:0000312" key="11">
    <source>
        <dbReference type="Proteomes" id="UP000001940"/>
    </source>
</evidence>
<evidence type="ECO:0000312" key="12">
    <source>
        <dbReference type="WormBase" id="K04A8.6a"/>
    </source>
</evidence>
<gene>
    <name evidence="12" type="primary">dre-1</name>
    <name evidence="12" type="ORF">K04A8.6</name>
</gene>
<comment type="function">
    <text evidence="5 6 7 8 9">Substrate recognition component of a SCF (SKP1-CUL1-F-box protein) E3 ubiquitin-protein ligase complex which mediates the ubiquitination and subsequent proteasomal degradation of target proteins including blmp-1 (PubMed:17336909, PubMed:23431138, PubMed:24613396, PubMed:24968003, PubMed:25827072). Promotes ubiquitination of snail family proteins ces-1, scrt-1 and snai-1 (PubMed:25827072). Heterochronic protein which is required for the timing of gonad development and epidermal seam cell differentiation (PubMed:17336909). Regulates tail-spike cell death through inhibition of the apoptosis regulator ced-9 (PubMed:23431138).</text>
</comment>
<comment type="pathway">
    <text evidence="9">Protein modification; protein ubiquitination.</text>
</comment>
<comment type="subunit">
    <text evidence="5 6 7 8">Component of a SCF ubiquitin ligase complex (PubMed:17336909, PubMed:23431138, PubMed:24613396, PubMed:24968003). Interacts (via F-box) with skr-1 (PubMed:17336909, PubMed:23431138). Interacts with blmp-1; the interaction targets blmp-1 for proteasomal degradation (PubMed:24613396). Interacts with ced-9; the interaction inhibits ced-9 activity, either directly or indirectly (PubMed:23431138).</text>
</comment>
<comment type="interaction">
    <interactant intactId="EBI-314286">
        <id>Q94251</id>
    </interactant>
    <interactant intactId="EBI-323117">
        <id>G5ECU1</id>
        <label>skr-1</label>
    </interactant>
    <organismsDiffer>false</organismsDiffer>
    <experiments>3</experiments>
</comment>
<comment type="subcellular location">
    <subcellularLocation>
        <location evidence="5">Nucleus</location>
    </subcellularLocation>
    <subcellularLocation>
        <location evidence="5">Cytoplasm</location>
    </subcellularLocation>
</comment>
<comment type="tissue specificity">
    <text evidence="5 6">In mid-embryogenesis, expression is most prominent in epidermal and intestinal cells (PubMed:17336909). By the 1.5-fold stage of embryogenesis, expression is additionally detected in neurons and other cells (PubMed:17336909). During larval and adult stages, highest expression is seen in epidermal seam cells and hypodermis (PubMed:17336909). In larvae, strongly expressed in the P epidermal blast cells and descendents that give rise to the vulva and weakly expressed in the somatic gonad, including the gonadoblasts, the anchor cell and the distal tip cells (PubMed:17336909). Some weak expression also seen in adult spermatheca and uterus (PubMed:17336909). In the musculature, expressed in the pharynx, anal depressor, sex muscles, and body wall muscles. Detected in neurons of the head, tail, ventral cord and periphery (PubMed:17336909). Also expressed in the embryonic tail spike cell (PubMed:23431138).</text>
</comment>
<comment type="developmental stage">
    <text evidence="5">Expression is first detected during mid-embryogenesis with high levels in larvae and low levels in adults.</text>
</comment>
<comment type="disruption phenotype">
    <text evidence="5 7">Most mutants arrest as three-fold embryos that fail to hatch and those that hatch arrest in L1 with many animals appearing uncoordinated and misshapen (PubMed:17336909). 7- to 8-fold increase in blmp-1 levels in seam and hypodermal cells (PubMed:24613396).</text>
</comment>
<feature type="chain" id="PRO_0000430929" description="F-box protein dre-1" evidence="10">
    <location>
        <begin position="1"/>
        <end position="936"/>
    </location>
</feature>
<feature type="domain" description="F-box" evidence="2">
    <location>
        <begin position="159"/>
        <end position="205"/>
    </location>
</feature>
<feature type="repeat" description="PbH1 1" evidence="1">
    <location>
        <begin position="405"/>
        <end position="427"/>
    </location>
</feature>
<feature type="repeat" description="PbH1 2" evidence="1">
    <location>
        <begin position="428"/>
        <end position="450"/>
    </location>
</feature>
<feature type="repeat" description="PbH1 3" evidence="1">
    <location>
        <begin position="451"/>
        <end position="473"/>
    </location>
</feature>
<feature type="repeat" description="PbH1 4" evidence="1">
    <location>
        <begin position="474"/>
        <end position="496"/>
    </location>
</feature>
<feature type="repeat" description="PbH1 5" evidence="1">
    <location>
        <begin position="497"/>
        <end position="519"/>
    </location>
</feature>
<feature type="repeat" description="PbH1 6" evidence="1">
    <location>
        <begin position="520"/>
        <end position="542"/>
    </location>
</feature>
<feature type="repeat" description="PbH1 7" evidence="1">
    <location>
        <begin position="543"/>
        <end position="565"/>
    </location>
</feature>
<feature type="repeat" description="PbH1 8" evidence="1">
    <location>
        <begin position="566"/>
        <end position="588"/>
    </location>
</feature>
<feature type="repeat" description="PbH1 9" evidence="1">
    <location>
        <begin position="589"/>
        <end position="611"/>
    </location>
</feature>
<feature type="repeat" description="PbH1 10" evidence="1">
    <location>
        <begin position="612"/>
        <end position="634"/>
    </location>
</feature>
<feature type="repeat" description="PbH1 11" evidence="1">
    <location>
        <begin position="635"/>
        <end position="657"/>
    </location>
</feature>
<feature type="repeat" description="PbH1 12" evidence="1">
    <location>
        <begin position="658"/>
        <end position="680"/>
    </location>
</feature>
<feature type="repeat" description="PbH1 13" evidence="1">
    <location>
        <begin position="681"/>
        <end position="703"/>
    </location>
</feature>
<feature type="repeat" description="PbH1 14" evidence="1">
    <location>
        <begin position="704"/>
        <end position="726"/>
    </location>
</feature>
<feature type="repeat" description="PbH1 15" evidence="1">
    <location>
        <begin position="727"/>
        <end position="749"/>
    </location>
</feature>
<feature type="repeat" description="PbH1 16" evidence="1">
    <location>
        <begin position="750"/>
        <end position="772"/>
    </location>
</feature>
<feature type="repeat" description="PbH1 17" evidence="1">
    <location>
        <begin position="773"/>
        <end position="795"/>
    </location>
</feature>
<feature type="repeat" description="PbH1 18" evidence="1">
    <location>
        <begin position="796"/>
        <end position="818"/>
    </location>
</feature>
<feature type="zinc finger region" description="UBR-type" evidence="3">
    <location>
        <begin position="843"/>
        <end position="914"/>
    </location>
</feature>
<feature type="region of interest" description="Disordered" evidence="4">
    <location>
        <begin position="1"/>
        <end position="67"/>
    </location>
</feature>
<feature type="compositionally biased region" description="Low complexity" evidence="4">
    <location>
        <begin position="22"/>
        <end position="36"/>
    </location>
</feature>
<feature type="compositionally biased region" description="Polar residues" evidence="4">
    <location>
        <begin position="48"/>
        <end position="63"/>
    </location>
</feature>
<feature type="mutagenesis site" description="In ns39; strong tail spike cell survival defect with 79% of animals possessing an inappropriately surviving cell." evidence="6">
    <original>S</original>
    <variation>A</variation>
    <location>
        <position position="275"/>
    </location>
</feature>
<feature type="mutagenesis site" description="In dh99; failure of distal tip cells to migrate completely back to the midbody, precocious fusion of epidermal seam cells, molting defects, constitutive dauer formation and increased blmp-1 levels." evidence="5 7">
    <original>G</original>
    <variation>S</variation>
    <location>
        <position position="514"/>
    </location>
</feature>
<feature type="mutagenesis site" description="In dh190/dh292; enhances gonadal heterochrony phenotype in daf-12 null mutants." evidence="5">
    <original>G</original>
    <variation>R</variation>
    <location>
        <position position="629"/>
    </location>
</feature>
<feature type="mutagenesis site" description="In dh278/dh284; enhances gonadal heterochrony phenotype in daf-12 null mutants." evidence="5">
    <original>G</original>
    <variation>R</variation>
    <location>
        <position position="744"/>
    </location>
</feature>
<feature type="mutagenesis site" description="In dh280; enhances gonadal heterochrony phenotype in daf-12 null mutants." evidence="5">
    <original>A</original>
    <variation>V</variation>
    <location>
        <position position="902"/>
    </location>
</feature>
<organism evidence="11">
    <name type="scientific">Caenorhabditis elegans</name>
    <dbReference type="NCBI Taxonomy" id="6239"/>
    <lineage>
        <taxon>Eukaryota</taxon>
        <taxon>Metazoa</taxon>
        <taxon>Ecdysozoa</taxon>
        <taxon>Nematoda</taxon>
        <taxon>Chromadorea</taxon>
        <taxon>Rhabditida</taxon>
        <taxon>Rhabditina</taxon>
        <taxon>Rhabditomorpha</taxon>
        <taxon>Rhabditoidea</taxon>
        <taxon>Rhabditidae</taxon>
        <taxon>Peloderinae</taxon>
        <taxon>Caenorhabditis</taxon>
    </lineage>
</organism>
<proteinExistence type="evidence at protein level"/>
<accession>Q94251</accession>
<sequence length="936" mass="105071">MSSSSSPFFHPPPQQVMDDTTQQSPSYSQNSNSPSQHTFESMEPAAGGSTSMRYSPSGSSEADNPTLGLFSAQASYPYSLRKRRPCLTKDEDLCFPITAATADETPQPTMKKFKLECLSPGEARDFSIEDESGTNLEAKMETTECEPEEEEAVEEEDQQDHINRLPEELLLKVFSFLPDKSLLACSSVSYRFNQISNSHEVWKELYCNLYDYRIPLFHPSHAKFEFREQSRWRDGNPWKESHRQLHHGVHVMKEPRVNLRSVNYRCFDQIEKAQSFLEEDEYREKLIFLHTGVHEPIDTILINTDVQIIGASDSRDITSSVVLEGSKNTALTFTDGSANAYFGFITVRFRADPVCRQQPQIAQQAQQMNHFYSILVTDKDAMPYIERCDITSKVGNGAAVCVKKSAAPKFKYCTVLDCENVGIYITDNATGHYEHCEIARNTLAGVWVKNHANPYFRKCTIHSGKDVGVFTFEHGQGYFEKCNIHSNRISGIEVKNSANPVVIRCEVHHGYTGGIYVHERGRGQFMENRIYANAYAGIWITSHSDPTIRKNEIFTGQQGGVYIFGEGRGLIEQNNIYGNALAGIQIRSQSDPIVRLNKIHDGLHGGIYVHEKGRGLIEENEVYGNTLAGIWVTTGSSPILRKNRIHSGKQVGVYFYDQGHGLLEENDIFNHLYSGVQIRTGSNPKITRNKIWGGQNGGVLVYNGGKGCLEDNEIFDNAMAGVWIKTDSEPTLRRNKIYDGRDGGVCIFNRGKGLLEDNEIFRNAQAGVLISTESNPTLRRNRVFDGKSAGIEITNGATATLEENQLFRNKYGGLCVATGVTPVQRGNRIYDNHDTISRAIKTGLCLFKVSSNNSFPMHNFYRCTTCNTTERNAICTNCIRTCHRGHSVELVRFDRFFCDCGAGTLERHCHLQNVPRDNDTVYDSATPISTETGTEI</sequence>
<keyword id="KW-0053">Apoptosis</keyword>
<keyword id="KW-0963">Cytoplasm</keyword>
<keyword id="KW-0217">Developmental protein</keyword>
<keyword id="KW-0479">Metal-binding</keyword>
<keyword id="KW-0539">Nucleus</keyword>
<keyword id="KW-1185">Reference proteome</keyword>
<keyword id="KW-0677">Repeat</keyword>
<keyword id="KW-0833">Ubl conjugation pathway</keyword>
<keyword id="KW-0862">Zinc</keyword>
<keyword id="KW-0863">Zinc-finger</keyword>
<dbReference type="EMBL" id="FO081056">
    <property type="protein sequence ID" value="CCD68857.1"/>
    <property type="molecule type" value="Genomic_DNA"/>
</dbReference>
<dbReference type="RefSeq" id="NP_001379860.1">
    <property type="nucleotide sequence ID" value="NM_001392535.1"/>
</dbReference>
<dbReference type="RefSeq" id="NP_504661.1">
    <property type="nucleotide sequence ID" value="NM_072260.5"/>
</dbReference>
<dbReference type="SMR" id="Q94251"/>
<dbReference type="BioGRID" id="44090">
    <property type="interactions" value="5"/>
</dbReference>
<dbReference type="DIP" id="DIP-27041N"/>
<dbReference type="FunCoup" id="Q94251">
    <property type="interactions" value="3362"/>
</dbReference>
<dbReference type="IntAct" id="Q94251">
    <property type="interactions" value="2"/>
</dbReference>
<dbReference type="STRING" id="6239.K04A8.6b.1"/>
<dbReference type="PaxDb" id="6239-K04A8.6"/>
<dbReference type="PeptideAtlas" id="Q94251"/>
<dbReference type="EnsemblMetazoa" id="K04A8.6a.1">
    <property type="protein sequence ID" value="K04A8.6a.1"/>
    <property type="gene ID" value="WBGene00001089"/>
</dbReference>
<dbReference type="EnsemblMetazoa" id="K04A8.6a.2">
    <property type="protein sequence ID" value="K04A8.6a.2"/>
    <property type="gene ID" value="WBGene00001089"/>
</dbReference>
<dbReference type="GeneID" id="179045"/>
<dbReference type="UCSC" id="K04A8.6">
    <property type="organism name" value="c. elegans"/>
</dbReference>
<dbReference type="AGR" id="WB:WBGene00001089"/>
<dbReference type="WormBase" id="K04A8.6a">
    <property type="protein sequence ID" value="CE27388"/>
    <property type="gene ID" value="WBGene00001089"/>
    <property type="gene designation" value="dre-1"/>
</dbReference>
<dbReference type="eggNOG" id="KOG1777">
    <property type="taxonomic scope" value="Eukaryota"/>
</dbReference>
<dbReference type="GeneTree" id="ENSGT00530000063425"/>
<dbReference type="HOGENOM" id="CLU_005078_1_0_1"/>
<dbReference type="InParanoid" id="Q94251"/>
<dbReference type="PhylomeDB" id="Q94251"/>
<dbReference type="Reactome" id="R-CEL-8951664">
    <property type="pathway name" value="Neddylation"/>
</dbReference>
<dbReference type="Reactome" id="R-CEL-983168">
    <property type="pathway name" value="Antigen processing: Ubiquitination &amp; Proteasome degradation"/>
</dbReference>
<dbReference type="UniPathway" id="UPA00143"/>
<dbReference type="PRO" id="PR:Q94251"/>
<dbReference type="Proteomes" id="UP000001940">
    <property type="component" value="Chromosome V"/>
</dbReference>
<dbReference type="Bgee" id="WBGene00001089">
    <property type="expression patterns" value="Expressed in pharyngeal muscle cell (C elegans) and 3 other cell types or tissues"/>
</dbReference>
<dbReference type="ExpressionAtlas" id="Q94251">
    <property type="expression patterns" value="baseline and differential"/>
</dbReference>
<dbReference type="GO" id="GO:0005737">
    <property type="term" value="C:cytoplasm"/>
    <property type="evidence" value="ECO:0000314"/>
    <property type="project" value="WormBase"/>
</dbReference>
<dbReference type="GO" id="GO:0005634">
    <property type="term" value="C:nucleus"/>
    <property type="evidence" value="ECO:0000314"/>
    <property type="project" value="WormBase"/>
</dbReference>
<dbReference type="GO" id="GO:0008270">
    <property type="term" value="F:zinc ion binding"/>
    <property type="evidence" value="ECO:0007669"/>
    <property type="project" value="UniProtKB-KW"/>
</dbReference>
<dbReference type="GO" id="GO:0006915">
    <property type="term" value="P:apoptotic process"/>
    <property type="evidence" value="ECO:0007669"/>
    <property type="project" value="UniProtKB-KW"/>
</dbReference>
<dbReference type="GO" id="GO:0009792">
    <property type="term" value="P:embryo development ending in birth or egg hatching"/>
    <property type="evidence" value="ECO:0000315"/>
    <property type="project" value="WormBase"/>
</dbReference>
<dbReference type="GO" id="GO:0008406">
    <property type="term" value="P:gonad development"/>
    <property type="evidence" value="ECO:0000316"/>
    <property type="project" value="WormBase"/>
</dbReference>
<dbReference type="GO" id="GO:0008078">
    <property type="term" value="P:mesodermal cell migration"/>
    <property type="evidence" value="ECO:0000316"/>
    <property type="project" value="WormBase"/>
</dbReference>
<dbReference type="GO" id="GO:0018996">
    <property type="term" value="P:molting cycle, collagen and cuticulin-based cuticle"/>
    <property type="evidence" value="ECO:0000315"/>
    <property type="project" value="WormBase"/>
</dbReference>
<dbReference type="GO" id="GO:0002119">
    <property type="term" value="P:nematode larval development"/>
    <property type="evidence" value="ECO:0000315"/>
    <property type="project" value="WormBase"/>
</dbReference>
<dbReference type="GO" id="GO:0043065">
    <property type="term" value="P:positive regulation of apoptotic process"/>
    <property type="evidence" value="ECO:0000315"/>
    <property type="project" value="WormBase"/>
</dbReference>
<dbReference type="GO" id="GO:1904747">
    <property type="term" value="P:positive regulation of apoptotic process involved in development"/>
    <property type="evidence" value="ECO:0000315"/>
    <property type="project" value="WormBase"/>
</dbReference>
<dbReference type="GO" id="GO:0042981">
    <property type="term" value="P:regulation of apoptotic process"/>
    <property type="evidence" value="ECO:0000318"/>
    <property type="project" value="GO_Central"/>
</dbReference>
<dbReference type="GO" id="GO:0040034">
    <property type="term" value="P:regulation of development, heterochronic"/>
    <property type="evidence" value="ECO:0000315"/>
    <property type="project" value="WormBase"/>
</dbReference>
<dbReference type="GO" id="GO:0006511">
    <property type="term" value="P:ubiquitin-dependent protein catabolic process"/>
    <property type="evidence" value="ECO:0000318"/>
    <property type="project" value="GO_Central"/>
</dbReference>
<dbReference type="CDD" id="cd19676">
    <property type="entry name" value="UBR-box_UBR6_FBXO11"/>
    <property type="match status" value="1"/>
</dbReference>
<dbReference type="FunFam" id="2.160.20.10:FF:000005">
    <property type="entry name" value="F-box only protein 11"/>
    <property type="match status" value="1"/>
</dbReference>
<dbReference type="FunFam" id="2.160.20.10:FF:000006">
    <property type="entry name" value="F-box only protein 11"/>
    <property type="match status" value="1"/>
</dbReference>
<dbReference type="FunFam" id="1.20.1280.50:FF:000100">
    <property type="entry name" value="F-box protein dre-1"/>
    <property type="match status" value="1"/>
</dbReference>
<dbReference type="Gene3D" id="1.20.1280.50">
    <property type="match status" value="1"/>
</dbReference>
<dbReference type="Gene3D" id="2.160.20.10">
    <property type="entry name" value="Single-stranded right-handed beta-helix, Pectin lyase-like"/>
    <property type="match status" value="3"/>
</dbReference>
<dbReference type="InterPro" id="IPR039448">
    <property type="entry name" value="Beta_helix"/>
</dbReference>
<dbReference type="InterPro" id="IPR006633">
    <property type="entry name" value="Carb-bd_sugar_hydrolysis-dom"/>
</dbReference>
<dbReference type="InterPro" id="IPR036047">
    <property type="entry name" value="F-box-like_dom_sf"/>
</dbReference>
<dbReference type="InterPro" id="IPR001810">
    <property type="entry name" value="F-box_dom"/>
</dbReference>
<dbReference type="InterPro" id="IPR047504">
    <property type="entry name" value="FBXO11_UBR-box"/>
</dbReference>
<dbReference type="InterPro" id="IPR022441">
    <property type="entry name" value="Para_beta_helix_rpt-2"/>
</dbReference>
<dbReference type="InterPro" id="IPR006626">
    <property type="entry name" value="PbH1"/>
</dbReference>
<dbReference type="InterPro" id="IPR012334">
    <property type="entry name" value="Pectin_lyas_fold"/>
</dbReference>
<dbReference type="InterPro" id="IPR011050">
    <property type="entry name" value="Pectin_lyase_fold/virulence"/>
</dbReference>
<dbReference type="InterPro" id="IPR051550">
    <property type="entry name" value="SCF-Subunits/Alg-Epimerases"/>
</dbReference>
<dbReference type="InterPro" id="IPR003126">
    <property type="entry name" value="Znf_UBR"/>
</dbReference>
<dbReference type="NCBIfam" id="TIGR03804">
    <property type="entry name" value="para_beta_helix"/>
    <property type="match status" value="2"/>
</dbReference>
<dbReference type="PANTHER" id="PTHR22990">
    <property type="entry name" value="F-BOX ONLY PROTEIN"/>
    <property type="match status" value="1"/>
</dbReference>
<dbReference type="PANTHER" id="PTHR22990:SF20">
    <property type="entry name" value="F-BOX ONLY PROTEIN 11"/>
    <property type="match status" value="1"/>
</dbReference>
<dbReference type="Pfam" id="PF13229">
    <property type="entry name" value="Beta_helix"/>
    <property type="match status" value="2"/>
</dbReference>
<dbReference type="Pfam" id="PF12937">
    <property type="entry name" value="F-box-like"/>
    <property type="match status" value="1"/>
</dbReference>
<dbReference type="Pfam" id="PF02207">
    <property type="entry name" value="zf-UBR"/>
    <property type="match status" value="1"/>
</dbReference>
<dbReference type="SMART" id="SM00722">
    <property type="entry name" value="CASH"/>
    <property type="match status" value="3"/>
</dbReference>
<dbReference type="SMART" id="SM00256">
    <property type="entry name" value="FBOX"/>
    <property type="match status" value="1"/>
</dbReference>
<dbReference type="SMART" id="SM00710">
    <property type="entry name" value="PbH1"/>
    <property type="match status" value="18"/>
</dbReference>
<dbReference type="SMART" id="SM00396">
    <property type="entry name" value="ZnF_UBR1"/>
    <property type="match status" value="1"/>
</dbReference>
<dbReference type="SUPFAM" id="SSF81383">
    <property type="entry name" value="F-box domain"/>
    <property type="match status" value="1"/>
</dbReference>
<dbReference type="SUPFAM" id="SSF51126">
    <property type="entry name" value="Pectin lyase-like"/>
    <property type="match status" value="3"/>
</dbReference>
<dbReference type="PROSITE" id="PS50181">
    <property type="entry name" value="FBOX"/>
    <property type="match status" value="1"/>
</dbReference>
<dbReference type="PROSITE" id="PS51157">
    <property type="entry name" value="ZF_UBR"/>
    <property type="match status" value="1"/>
</dbReference>
<reference evidence="11" key="1">
    <citation type="journal article" date="1998" name="Science">
        <title>Genome sequence of the nematode C. elegans: a platform for investigating biology.</title>
        <authorList>
            <consortium name="The C. elegans sequencing consortium"/>
        </authorList>
    </citation>
    <scope>NUCLEOTIDE SEQUENCE [LARGE SCALE GENOMIC DNA]</scope>
    <source>
        <strain evidence="11">Bristol N2</strain>
    </source>
</reference>
<reference evidence="10" key="2">
    <citation type="journal article" date="2007" name="Dev. Cell">
        <title>DRE-1: an evolutionarily conserved F box protein that regulates C. elegans developmental age.</title>
        <authorList>
            <person name="Fielenbach N."/>
            <person name="Guardavaccaro D."/>
            <person name="Neubert K."/>
            <person name="Chan T."/>
            <person name="Li D."/>
            <person name="Feng Q."/>
            <person name="Hutter H."/>
            <person name="Pagano M."/>
            <person name="Antebi A."/>
        </authorList>
    </citation>
    <scope>FUNCTION</scope>
    <scope>INTERACTION WITH SKR-1</scope>
    <scope>SUBCELLULAR LOCATION</scope>
    <scope>TISSUE SPECIFICITY</scope>
    <scope>DEVELOPMENTAL STAGE</scope>
    <scope>DISRUPTION PHENOTYPE</scope>
    <scope>MUTAGENESIS OF GLY-514; GLY-629; GLY-744 AND ALA-902</scope>
</reference>
<reference evidence="10" key="3">
    <citation type="journal article" date="2013" name="Proc. Natl. Acad. Sci. U.S.A.">
        <title>Related F-box proteins control cell death in Caenorhabditis elegans and human lymphoma.</title>
        <authorList>
            <person name="Chiorazzi M."/>
            <person name="Rui L."/>
            <person name="Yang Y."/>
            <person name="Ceribelli M."/>
            <person name="Tishbi N."/>
            <person name="Maurer C.W."/>
            <person name="Ranuncolo S.M."/>
            <person name="Zhao H."/>
            <person name="Xu W."/>
            <person name="Chan W.C."/>
            <person name="Jaffe E.S."/>
            <person name="Gascoyne R.D."/>
            <person name="Campo E."/>
            <person name="Rosenwald A."/>
            <person name="Ott G."/>
            <person name="Delabie J."/>
            <person name="Rimsza L.M."/>
            <person name="Shaham S."/>
            <person name="Staudt L.M."/>
        </authorList>
    </citation>
    <scope>FUNCTION</scope>
    <scope>INTERACTION WITH CED-9 AND SKR-1</scope>
    <scope>TISSUE SPECIFICITY</scope>
    <scope>MUTAGENESIS OF SER-275</scope>
</reference>
<reference evidence="10" key="4">
    <citation type="journal article" date="2014" name="Dev. Cell">
        <title>DRE-1/FBXO11-dependent degradation of BLMP-1/BLIMP-1 governs C. elegans developmental timing and maturation.</title>
        <authorList>
            <person name="Horn M."/>
            <person name="Geisen C."/>
            <person name="Cermak L."/>
            <person name="Becker B."/>
            <person name="Nakamura S."/>
            <person name="Klein C."/>
            <person name="Pagano M."/>
            <person name="Antebi A."/>
        </authorList>
    </citation>
    <scope>FUNCTION</scope>
    <scope>INTERACTION WITH BLMP-1</scope>
    <scope>DISRUPTION PHENOTYPE</scope>
    <scope>MUTAGENESIS OF GLY-514</scope>
</reference>
<reference evidence="10" key="5">
    <citation type="journal article" date="2014" name="PLoS Genet.">
        <title>BLMP-1/Blimp-1 regulates the spatiotemporal cell migration pattern in C. elegans.</title>
        <authorList>
            <person name="Huang T.F."/>
            <person name="Cho C.Y."/>
            <person name="Cheng Y.T."/>
            <person name="Huang J.W."/>
            <person name="Wu Y.Z."/>
            <person name="Yeh A.Y."/>
            <person name="Nishiwaki K."/>
            <person name="Chang S.C."/>
            <person name="Wu Y.C."/>
        </authorList>
    </citation>
    <scope>FUNCTION</scope>
    <scope>INTERACTION WITH BLMP-1</scope>
</reference>
<reference key="6">
    <citation type="journal article" date="2015" name="Cancer Lett.">
        <title>FBXO11 promotes ubiquitination of the Snail family of transcription factors in cancer progression and epidermal development.</title>
        <authorList>
            <person name="Jin Y."/>
            <person name="Shenoy A.K."/>
            <person name="Doernberg S."/>
            <person name="Chen H."/>
            <person name="Luo H."/>
            <person name="Shen H."/>
            <person name="Lin T."/>
            <person name="Tarrash M."/>
            <person name="Cai Q."/>
            <person name="Hu X."/>
            <person name="Fiske R."/>
            <person name="Chen T."/>
            <person name="Wu L."/>
            <person name="Mohammed K.A."/>
            <person name="Rottiers V."/>
            <person name="Lee S.S."/>
            <person name="Lu J."/>
        </authorList>
    </citation>
    <scope>FUNCTION</scope>
    <scope>PATHWAY</scope>
</reference>